<sequence length="395" mass="42537">MKKDYYEVLGLSRSATKDEIKKAYRKLAMQYHPDKNPDNKDAEEHFKEVNEAYEALSNDDKRRRYDQFGHAGVGSSAASGGGQYGAGASDFSDIFSAFNDMFGGGKQRGGFEDVFGGAAGAGGRRGRASGGIHGTDLKIRLKLTLEEIAHGVEKTLKIKKQIACTECNGTGSKSGATETCPTCHGSGEVRQAAKTMFGQFVNITACPTCGGEGRVVKDRCVSCYGEGIKQGEVTVKVTVPAGVQDSNYLTLRGQGNAGPRGGANGDLIVVIEEKPHEKFQRNGDDVIYHLALGFPDLVLGTKVDVPTLDGSVKLTIPPSTQPETMLRIPGHGIGHLRGSGRGDQYVRVNVFVPKEVSSHDRELLKELKNSSAISPADQNDREEKSFFEKARDIFS</sequence>
<accession>A1BHL1</accession>
<protein>
    <recommendedName>
        <fullName evidence="1">Chaperone protein DnaJ</fullName>
    </recommendedName>
</protein>
<comment type="function">
    <text evidence="1">Participates actively in the response to hyperosmotic and heat shock by preventing the aggregation of stress-denatured proteins and by disaggregating proteins, also in an autonomous, DnaK-independent fashion. Unfolded proteins bind initially to DnaJ; upon interaction with the DnaJ-bound protein, DnaK hydrolyzes its bound ATP, resulting in the formation of a stable complex. GrpE releases ADP from DnaK; ATP binding to DnaK triggers the release of the substrate protein, thus completing the reaction cycle. Several rounds of ATP-dependent interactions between DnaJ, DnaK and GrpE are required for fully efficient folding. Also involved, together with DnaK and GrpE, in the DNA replication of plasmids through activation of initiation proteins.</text>
</comment>
<comment type="cofactor">
    <cofactor evidence="1">
        <name>Zn(2+)</name>
        <dbReference type="ChEBI" id="CHEBI:29105"/>
    </cofactor>
    <text evidence="1">Binds 2 Zn(2+) ions per monomer.</text>
</comment>
<comment type="subunit">
    <text evidence="1">Homodimer.</text>
</comment>
<comment type="subcellular location">
    <subcellularLocation>
        <location evidence="1">Cytoplasm</location>
    </subcellularLocation>
</comment>
<comment type="domain">
    <text evidence="1">The J domain is necessary and sufficient to stimulate DnaK ATPase activity. Zinc center 1 plays an important role in the autonomous, DnaK-independent chaperone activity of DnaJ. Zinc center 2 is essential for interaction with DnaK and for DnaJ activity.</text>
</comment>
<comment type="similarity">
    <text evidence="1">Belongs to the DnaJ family.</text>
</comment>
<name>DNAJ_CHLPD</name>
<keyword id="KW-0143">Chaperone</keyword>
<keyword id="KW-0963">Cytoplasm</keyword>
<keyword id="KW-0235">DNA replication</keyword>
<keyword id="KW-0479">Metal-binding</keyword>
<keyword id="KW-1185">Reference proteome</keyword>
<keyword id="KW-0677">Repeat</keyword>
<keyword id="KW-0346">Stress response</keyword>
<keyword id="KW-0862">Zinc</keyword>
<keyword id="KW-0863">Zinc-finger</keyword>
<organism>
    <name type="scientific">Chlorobium phaeobacteroides (strain DSM 266 / SMG 266 / 2430)</name>
    <dbReference type="NCBI Taxonomy" id="290317"/>
    <lineage>
        <taxon>Bacteria</taxon>
        <taxon>Pseudomonadati</taxon>
        <taxon>Chlorobiota</taxon>
        <taxon>Chlorobiia</taxon>
        <taxon>Chlorobiales</taxon>
        <taxon>Chlorobiaceae</taxon>
        <taxon>Chlorobium/Pelodictyon group</taxon>
        <taxon>Chlorobium</taxon>
    </lineage>
</organism>
<reference key="1">
    <citation type="submission" date="2006-12" db="EMBL/GenBank/DDBJ databases">
        <title>Complete sequence of Chlorobium phaeobacteroides DSM 266.</title>
        <authorList>
            <consortium name="US DOE Joint Genome Institute"/>
            <person name="Copeland A."/>
            <person name="Lucas S."/>
            <person name="Lapidus A."/>
            <person name="Barry K."/>
            <person name="Detter J.C."/>
            <person name="Glavina del Rio T."/>
            <person name="Hammon N."/>
            <person name="Israni S."/>
            <person name="Pitluck S."/>
            <person name="Goltsman E."/>
            <person name="Schmutz J."/>
            <person name="Larimer F."/>
            <person name="Land M."/>
            <person name="Hauser L."/>
            <person name="Mikhailova N."/>
            <person name="Li T."/>
            <person name="Overmann J."/>
            <person name="Bryant D.A."/>
            <person name="Richardson P."/>
        </authorList>
    </citation>
    <scope>NUCLEOTIDE SEQUENCE [LARGE SCALE GENOMIC DNA]</scope>
    <source>
        <strain>DSM 266 / SMG 266 / 2430</strain>
    </source>
</reference>
<proteinExistence type="inferred from homology"/>
<feature type="chain" id="PRO_1000085174" description="Chaperone protein DnaJ">
    <location>
        <begin position="1"/>
        <end position="395"/>
    </location>
</feature>
<feature type="domain" description="J" evidence="1">
    <location>
        <begin position="4"/>
        <end position="69"/>
    </location>
</feature>
<feature type="repeat" description="CXXCXGXG motif">
    <location>
        <begin position="164"/>
        <end position="171"/>
    </location>
</feature>
<feature type="repeat" description="CXXCXGXG motif">
    <location>
        <begin position="180"/>
        <end position="187"/>
    </location>
</feature>
<feature type="repeat" description="CXXCXGXG motif">
    <location>
        <begin position="206"/>
        <end position="213"/>
    </location>
</feature>
<feature type="repeat" description="CXXCXGXG motif">
    <location>
        <begin position="220"/>
        <end position="227"/>
    </location>
</feature>
<feature type="zinc finger region" description="CR-type" evidence="1">
    <location>
        <begin position="151"/>
        <end position="232"/>
    </location>
</feature>
<feature type="binding site" evidence="1">
    <location>
        <position position="164"/>
    </location>
    <ligand>
        <name>Zn(2+)</name>
        <dbReference type="ChEBI" id="CHEBI:29105"/>
        <label>1</label>
    </ligand>
</feature>
<feature type="binding site" evidence="1">
    <location>
        <position position="167"/>
    </location>
    <ligand>
        <name>Zn(2+)</name>
        <dbReference type="ChEBI" id="CHEBI:29105"/>
        <label>1</label>
    </ligand>
</feature>
<feature type="binding site" evidence="1">
    <location>
        <position position="180"/>
    </location>
    <ligand>
        <name>Zn(2+)</name>
        <dbReference type="ChEBI" id="CHEBI:29105"/>
        <label>2</label>
    </ligand>
</feature>
<feature type="binding site" evidence="1">
    <location>
        <position position="183"/>
    </location>
    <ligand>
        <name>Zn(2+)</name>
        <dbReference type="ChEBI" id="CHEBI:29105"/>
        <label>2</label>
    </ligand>
</feature>
<feature type="binding site" evidence="1">
    <location>
        <position position="206"/>
    </location>
    <ligand>
        <name>Zn(2+)</name>
        <dbReference type="ChEBI" id="CHEBI:29105"/>
        <label>2</label>
    </ligand>
</feature>
<feature type="binding site" evidence="1">
    <location>
        <position position="209"/>
    </location>
    <ligand>
        <name>Zn(2+)</name>
        <dbReference type="ChEBI" id="CHEBI:29105"/>
        <label>2</label>
    </ligand>
</feature>
<feature type="binding site" evidence="1">
    <location>
        <position position="220"/>
    </location>
    <ligand>
        <name>Zn(2+)</name>
        <dbReference type="ChEBI" id="CHEBI:29105"/>
        <label>1</label>
    </ligand>
</feature>
<feature type="binding site" evidence="1">
    <location>
        <position position="223"/>
    </location>
    <ligand>
        <name>Zn(2+)</name>
        <dbReference type="ChEBI" id="CHEBI:29105"/>
        <label>1</label>
    </ligand>
</feature>
<evidence type="ECO:0000255" key="1">
    <source>
        <dbReference type="HAMAP-Rule" id="MF_01152"/>
    </source>
</evidence>
<gene>
    <name evidence="1" type="primary">dnaJ</name>
    <name type="ordered locus">Cpha266_1872</name>
</gene>
<dbReference type="EMBL" id="CP000492">
    <property type="protein sequence ID" value="ABL65888.1"/>
    <property type="molecule type" value="Genomic_DNA"/>
</dbReference>
<dbReference type="RefSeq" id="WP_011745695.1">
    <property type="nucleotide sequence ID" value="NC_008639.1"/>
</dbReference>
<dbReference type="SMR" id="A1BHL1"/>
<dbReference type="STRING" id="290317.Cpha266_1872"/>
<dbReference type="KEGG" id="cph:Cpha266_1872"/>
<dbReference type="eggNOG" id="COG0484">
    <property type="taxonomic scope" value="Bacteria"/>
</dbReference>
<dbReference type="HOGENOM" id="CLU_017633_0_7_10"/>
<dbReference type="OrthoDB" id="9779889at2"/>
<dbReference type="Proteomes" id="UP000008701">
    <property type="component" value="Chromosome"/>
</dbReference>
<dbReference type="GO" id="GO:0005737">
    <property type="term" value="C:cytoplasm"/>
    <property type="evidence" value="ECO:0007669"/>
    <property type="project" value="UniProtKB-SubCell"/>
</dbReference>
<dbReference type="GO" id="GO:0005524">
    <property type="term" value="F:ATP binding"/>
    <property type="evidence" value="ECO:0007669"/>
    <property type="project" value="InterPro"/>
</dbReference>
<dbReference type="GO" id="GO:0031072">
    <property type="term" value="F:heat shock protein binding"/>
    <property type="evidence" value="ECO:0007669"/>
    <property type="project" value="InterPro"/>
</dbReference>
<dbReference type="GO" id="GO:0051082">
    <property type="term" value="F:unfolded protein binding"/>
    <property type="evidence" value="ECO:0007669"/>
    <property type="project" value="UniProtKB-UniRule"/>
</dbReference>
<dbReference type="GO" id="GO:0008270">
    <property type="term" value="F:zinc ion binding"/>
    <property type="evidence" value="ECO:0007669"/>
    <property type="project" value="UniProtKB-UniRule"/>
</dbReference>
<dbReference type="GO" id="GO:0051085">
    <property type="term" value="P:chaperone cofactor-dependent protein refolding"/>
    <property type="evidence" value="ECO:0007669"/>
    <property type="project" value="TreeGrafter"/>
</dbReference>
<dbReference type="GO" id="GO:0006260">
    <property type="term" value="P:DNA replication"/>
    <property type="evidence" value="ECO:0007669"/>
    <property type="project" value="UniProtKB-KW"/>
</dbReference>
<dbReference type="GO" id="GO:0042026">
    <property type="term" value="P:protein refolding"/>
    <property type="evidence" value="ECO:0007669"/>
    <property type="project" value="TreeGrafter"/>
</dbReference>
<dbReference type="GO" id="GO:0009408">
    <property type="term" value="P:response to heat"/>
    <property type="evidence" value="ECO:0007669"/>
    <property type="project" value="InterPro"/>
</dbReference>
<dbReference type="CDD" id="cd06257">
    <property type="entry name" value="DnaJ"/>
    <property type="match status" value="1"/>
</dbReference>
<dbReference type="CDD" id="cd10747">
    <property type="entry name" value="DnaJ_C"/>
    <property type="match status" value="1"/>
</dbReference>
<dbReference type="CDD" id="cd10719">
    <property type="entry name" value="DnaJ_zf"/>
    <property type="match status" value="1"/>
</dbReference>
<dbReference type="FunFam" id="1.10.287.110:FF:000034">
    <property type="entry name" value="Chaperone protein DnaJ"/>
    <property type="match status" value="1"/>
</dbReference>
<dbReference type="FunFam" id="2.60.260.20:FF:000005">
    <property type="entry name" value="Chaperone protein dnaJ 1, mitochondrial"/>
    <property type="match status" value="1"/>
</dbReference>
<dbReference type="FunFam" id="2.10.230.10:FF:000002">
    <property type="entry name" value="Molecular chaperone DnaJ"/>
    <property type="match status" value="1"/>
</dbReference>
<dbReference type="Gene3D" id="1.10.287.110">
    <property type="entry name" value="DnaJ domain"/>
    <property type="match status" value="1"/>
</dbReference>
<dbReference type="Gene3D" id="2.10.230.10">
    <property type="entry name" value="Heat shock protein DnaJ, cysteine-rich domain"/>
    <property type="match status" value="1"/>
</dbReference>
<dbReference type="Gene3D" id="2.60.260.20">
    <property type="entry name" value="Urease metallochaperone UreE, N-terminal domain"/>
    <property type="match status" value="2"/>
</dbReference>
<dbReference type="HAMAP" id="MF_01152">
    <property type="entry name" value="DnaJ"/>
    <property type="match status" value="1"/>
</dbReference>
<dbReference type="InterPro" id="IPR012724">
    <property type="entry name" value="DnaJ"/>
</dbReference>
<dbReference type="InterPro" id="IPR002939">
    <property type="entry name" value="DnaJ_C"/>
</dbReference>
<dbReference type="InterPro" id="IPR001623">
    <property type="entry name" value="DnaJ_domain"/>
</dbReference>
<dbReference type="InterPro" id="IPR018253">
    <property type="entry name" value="DnaJ_domain_CS"/>
</dbReference>
<dbReference type="InterPro" id="IPR008971">
    <property type="entry name" value="HSP40/DnaJ_pept-bd"/>
</dbReference>
<dbReference type="InterPro" id="IPR001305">
    <property type="entry name" value="HSP_DnaJ_Cys-rich_dom"/>
</dbReference>
<dbReference type="InterPro" id="IPR036410">
    <property type="entry name" value="HSP_DnaJ_Cys-rich_dom_sf"/>
</dbReference>
<dbReference type="InterPro" id="IPR036869">
    <property type="entry name" value="J_dom_sf"/>
</dbReference>
<dbReference type="NCBIfam" id="TIGR02349">
    <property type="entry name" value="DnaJ_bact"/>
    <property type="match status" value="1"/>
</dbReference>
<dbReference type="NCBIfam" id="NF008035">
    <property type="entry name" value="PRK10767.1"/>
    <property type="match status" value="1"/>
</dbReference>
<dbReference type="NCBIfam" id="NF010874">
    <property type="entry name" value="PRK14281.1"/>
    <property type="match status" value="1"/>
</dbReference>
<dbReference type="PANTHER" id="PTHR43096:SF48">
    <property type="entry name" value="CHAPERONE PROTEIN DNAJ"/>
    <property type="match status" value="1"/>
</dbReference>
<dbReference type="PANTHER" id="PTHR43096">
    <property type="entry name" value="DNAJ HOMOLOG 1, MITOCHONDRIAL-RELATED"/>
    <property type="match status" value="1"/>
</dbReference>
<dbReference type="Pfam" id="PF00226">
    <property type="entry name" value="DnaJ"/>
    <property type="match status" value="1"/>
</dbReference>
<dbReference type="Pfam" id="PF01556">
    <property type="entry name" value="DnaJ_C"/>
    <property type="match status" value="1"/>
</dbReference>
<dbReference type="Pfam" id="PF00684">
    <property type="entry name" value="DnaJ_CXXCXGXG"/>
    <property type="match status" value="1"/>
</dbReference>
<dbReference type="PRINTS" id="PR00625">
    <property type="entry name" value="JDOMAIN"/>
</dbReference>
<dbReference type="SMART" id="SM00271">
    <property type="entry name" value="DnaJ"/>
    <property type="match status" value="1"/>
</dbReference>
<dbReference type="SUPFAM" id="SSF46565">
    <property type="entry name" value="Chaperone J-domain"/>
    <property type="match status" value="1"/>
</dbReference>
<dbReference type="SUPFAM" id="SSF57938">
    <property type="entry name" value="DnaJ/Hsp40 cysteine-rich domain"/>
    <property type="match status" value="1"/>
</dbReference>
<dbReference type="SUPFAM" id="SSF49493">
    <property type="entry name" value="HSP40/DnaJ peptide-binding domain"/>
    <property type="match status" value="2"/>
</dbReference>
<dbReference type="PROSITE" id="PS00636">
    <property type="entry name" value="DNAJ_1"/>
    <property type="match status" value="1"/>
</dbReference>
<dbReference type="PROSITE" id="PS50076">
    <property type="entry name" value="DNAJ_2"/>
    <property type="match status" value="1"/>
</dbReference>
<dbReference type="PROSITE" id="PS51188">
    <property type="entry name" value="ZF_CR"/>
    <property type="match status" value="1"/>
</dbReference>